<organism>
    <name type="scientific">Streptococcus agalactiae serotype III (strain NEM316)</name>
    <dbReference type="NCBI Taxonomy" id="211110"/>
    <lineage>
        <taxon>Bacteria</taxon>
        <taxon>Bacillati</taxon>
        <taxon>Bacillota</taxon>
        <taxon>Bacilli</taxon>
        <taxon>Lactobacillales</taxon>
        <taxon>Streptococcaceae</taxon>
        <taxon>Streptococcus</taxon>
    </lineage>
</organism>
<proteinExistence type="inferred from homology"/>
<evidence type="ECO:0000255" key="1">
    <source>
        <dbReference type="HAMAP-Rule" id="MF_00238"/>
    </source>
</evidence>
<sequence>MNSINIAIDGPASSGKSTVAKIIAKNLNYTYLDTGAMYRCATYLALQHGYEAQDVSKILGLLAERPISFGKAEDGSQTVFIGTEEVTLAIRQNDVTNNVSWVSAIPEIREELVNQQRRIAKDGAIIMDGRDIGTVVLPDAELKIFLVASVDERAERRFKENQEKGIESDFETLKSEIAARDYKDSHREVSPLKAAEDAIEFDTTGVSIEGVVTFIQEKAEKIIDMKN</sequence>
<name>KCY_STRA3</name>
<reference key="1">
    <citation type="journal article" date="2002" name="Mol. Microbiol.">
        <title>Genome sequence of Streptococcus agalactiae, a pathogen causing invasive neonatal disease.</title>
        <authorList>
            <person name="Glaser P."/>
            <person name="Rusniok C."/>
            <person name="Buchrieser C."/>
            <person name="Chevalier F."/>
            <person name="Frangeul L."/>
            <person name="Msadek T."/>
            <person name="Zouine M."/>
            <person name="Couve E."/>
            <person name="Lalioui L."/>
            <person name="Poyart C."/>
            <person name="Trieu-Cuot P."/>
            <person name="Kunst F."/>
        </authorList>
    </citation>
    <scope>NUCLEOTIDE SEQUENCE [LARGE SCALE GENOMIC DNA]</scope>
    <source>
        <strain>NEM316</strain>
    </source>
</reference>
<gene>
    <name evidence="1" type="primary">cmk</name>
    <name type="ordered locus">gbs1455</name>
</gene>
<comment type="catalytic activity">
    <reaction evidence="1">
        <text>CMP + ATP = CDP + ADP</text>
        <dbReference type="Rhea" id="RHEA:11600"/>
        <dbReference type="ChEBI" id="CHEBI:30616"/>
        <dbReference type="ChEBI" id="CHEBI:58069"/>
        <dbReference type="ChEBI" id="CHEBI:60377"/>
        <dbReference type="ChEBI" id="CHEBI:456216"/>
        <dbReference type="EC" id="2.7.4.25"/>
    </reaction>
</comment>
<comment type="catalytic activity">
    <reaction evidence="1">
        <text>dCMP + ATP = dCDP + ADP</text>
        <dbReference type="Rhea" id="RHEA:25094"/>
        <dbReference type="ChEBI" id="CHEBI:30616"/>
        <dbReference type="ChEBI" id="CHEBI:57566"/>
        <dbReference type="ChEBI" id="CHEBI:58593"/>
        <dbReference type="ChEBI" id="CHEBI:456216"/>
        <dbReference type="EC" id="2.7.4.25"/>
    </reaction>
</comment>
<comment type="subcellular location">
    <subcellularLocation>
        <location evidence="1">Cytoplasm</location>
    </subcellularLocation>
</comment>
<comment type="similarity">
    <text evidence="1">Belongs to the cytidylate kinase family. Type 1 subfamily.</text>
</comment>
<feature type="chain" id="PRO_0000131980" description="Cytidylate kinase">
    <location>
        <begin position="1"/>
        <end position="227"/>
    </location>
</feature>
<feature type="binding site" evidence="1">
    <location>
        <begin position="10"/>
        <end position="18"/>
    </location>
    <ligand>
        <name>ATP</name>
        <dbReference type="ChEBI" id="CHEBI:30616"/>
    </ligand>
</feature>
<accession>Q8E4E6</accession>
<dbReference type="EC" id="2.7.4.25" evidence="1"/>
<dbReference type="EMBL" id="AL766850">
    <property type="protein sequence ID" value="CAD47114.1"/>
    <property type="molecule type" value="Genomic_DNA"/>
</dbReference>
<dbReference type="RefSeq" id="WP_001084715.1">
    <property type="nucleotide sequence ID" value="NC_004368.1"/>
</dbReference>
<dbReference type="SMR" id="Q8E4E6"/>
<dbReference type="KEGG" id="san:gbs1455"/>
<dbReference type="eggNOG" id="COG0283">
    <property type="taxonomic scope" value="Bacteria"/>
</dbReference>
<dbReference type="HOGENOM" id="CLU_079959_0_2_9"/>
<dbReference type="Proteomes" id="UP000000823">
    <property type="component" value="Chromosome"/>
</dbReference>
<dbReference type="GO" id="GO:0005829">
    <property type="term" value="C:cytosol"/>
    <property type="evidence" value="ECO:0007669"/>
    <property type="project" value="TreeGrafter"/>
</dbReference>
<dbReference type="GO" id="GO:0005524">
    <property type="term" value="F:ATP binding"/>
    <property type="evidence" value="ECO:0007669"/>
    <property type="project" value="UniProtKB-UniRule"/>
</dbReference>
<dbReference type="GO" id="GO:0036430">
    <property type="term" value="F:CMP kinase activity"/>
    <property type="evidence" value="ECO:0007669"/>
    <property type="project" value="RHEA"/>
</dbReference>
<dbReference type="GO" id="GO:0036431">
    <property type="term" value="F:dCMP kinase activity"/>
    <property type="evidence" value="ECO:0007669"/>
    <property type="project" value="RHEA"/>
</dbReference>
<dbReference type="GO" id="GO:0015949">
    <property type="term" value="P:nucleobase-containing small molecule interconversion"/>
    <property type="evidence" value="ECO:0007669"/>
    <property type="project" value="TreeGrafter"/>
</dbReference>
<dbReference type="GO" id="GO:0006220">
    <property type="term" value="P:pyrimidine nucleotide metabolic process"/>
    <property type="evidence" value="ECO:0007669"/>
    <property type="project" value="UniProtKB-UniRule"/>
</dbReference>
<dbReference type="CDD" id="cd02020">
    <property type="entry name" value="CMPK"/>
    <property type="match status" value="1"/>
</dbReference>
<dbReference type="FunFam" id="3.40.50.300:FF:000484">
    <property type="entry name" value="Cytidylate kinase"/>
    <property type="match status" value="1"/>
</dbReference>
<dbReference type="Gene3D" id="3.40.50.300">
    <property type="entry name" value="P-loop containing nucleotide triphosphate hydrolases"/>
    <property type="match status" value="1"/>
</dbReference>
<dbReference type="HAMAP" id="MF_00238">
    <property type="entry name" value="Cytidyl_kinase_type1"/>
    <property type="match status" value="1"/>
</dbReference>
<dbReference type="InterPro" id="IPR003136">
    <property type="entry name" value="Cytidylate_kin"/>
</dbReference>
<dbReference type="InterPro" id="IPR011994">
    <property type="entry name" value="Cytidylate_kinase_dom"/>
</dbReference>
<dbReference type="InterPro" id="IPR027417">
    <property type="entry name" value="P-loop_NTPase"/>
</dbReference>
<dbReference type="NCBIfam" id="TIGR00017">
    <property type="entry name" value="cmk"/>
    <property type="match status" value="1"/>
</dbReference>
<dbReference type="PANTHER" id="PTHR21299:SF2">
    <property type="entry name" value="CYTIDYLATE KINASE"/>
    <property type="match status" value="1"/>
</dbReference>
<dbReference type="PANTHER" id="PTHR21299">
    <property type="entry name" value="CYTIDYLATE KINASE/PANTOATE-BETA-ALANINE LIGASE"/>
    <property type="match status" value="1"/>
</dbReference>
<dbReference type="Pfam" id="PF02224">
    <property type="entry name" value="Cytidylate_kin"/>
    <property type="match status" value="1"/>
</dbReference>
<dbReference type="SUPFAM" id="SSF52540">
    <property type="entry name" value="P-loop containing nucleoside triphosphate hydrolases"/>
    <property type="match status" value="1"/>
</dbReference>
<keyword id="KW-0067">ATP-binding</keyword>
<keyword id="KW-0963">Cytoplasm</keyword>
<keyword id="KW-0418">Kinase</keyword>
<keyword id="KW-0547">Nucleotide-binding</keyword>
<keyword id="KW-0808">Transferase</keyword>
<protein>
    <recommendedName>
        <fullName evidence="1">Cytidylate kinase</fullName>
        <shortName evidence="1">CK</shortName>
        <ecNumber evidence="1">2.7.4.25</ecNumber>
    </recommendedName>
    <alternativeName>
        <fullName evidence="1">Cytidine monophosphate kinase</fullName>
        <shortName evidence="1">CMP kinase</shortName>
    </alternativeName>
</protein>